<keyword id="KW-1185">Reference proteome</keyword>
<keyword id="KW-0687">Ribonucleoprotein</keyword>
<keyword id="KW-0689">Ribosomal protein</keyword>
<proteinExistence type="inferred from homology"/>
<comment type="similarity">
    <text evidence="1">Belongs to the bacterial ribosomal protein bS16 family.</text>
</comment>
<evidence type="ECO:0000255" key="1">
    <source>
        <dbReference type="HAMAP-Rule" id="MF_00385"/>
    </source>
</evidence>
<evidence type="ECO:0000305" key="2"/>
<name>RS16_BACCR</name>
<sequence>MAVKIRLKRMGAKKTPFYRVVVADSRSPRDGRFIEEIGTYNPVAQPAEVKINEEAALKWLGNGAKPSDTVRNLFSNQGIMEKFHLSKQGK</sequence>
<organism>
    <name type="scientific">Bacillus cereus (strain ATCC 14579 / DSM 31 / CCUG 7414 / JCM 2152 / NBRC 15305 / NCIMB 9373 / NCTC 2599 / NRRL B-3711)</name>
    <dbReference type="NCBI Taxonomy" id="226900"/>
    <lineage>
        <taxon>Bacteria</taxon>
        <taxon>Bacillati</taxon>
        <taxon>Bacillota</taxon>
        <taxon>Bacilli</taxon>
        <taxon>Bacillales</taxon>
        <taxon>Bacillaceae</taxon>
        <taxon>Bacillus</taxon>
        <taxon>Bacillus cereus group</taxon>
    </lineage>
</organism>
<feature type="chain" id="PRO_0000167149" description="Small ribosomal subunit protein bS16">
    <location>
        <begin position="1"/>
        <end position="90"/>
    </location>
</feature>
<protein>
    <recommendedName>
        <fullName evidence="1">Small ribosomal subunit protein bS16</fullName>
    </recommendedName>
    <alternativeName>
        <fullName evidence="2">30S ribosomal protein S16</fullName>
    </alternativeName>
</protein>
<dbReference type="EMBL" id="AE016877">
    <property type="protein sequence ID" value="AAP10764.1"/>
    <property type="molecule type" value="Genomic_DNA"/>
</dbReference>
<dbReference type="RefSeq" id="NP_833563.1">
    <property type="nucleotide sequence ID" value="NC_004722.1"/>
</dbReference>
<dbReference type="RefSeq" id="WP_000268750.1">
    <property type="nucleotide sequence ID" value="NZ_CP138336.1"/>
</dbReference>
<dbReference type="SMR" id="Q819W3"/>
<dbReference type="STRING" id="226900.BC_3842"/>
<dbReference type="MetOSite" id="Q819W3"/>
<dbReference type="GeneID" id="93007268"/>
<dbReference type="KEGG" id="bce:BC3842"/>
<dbReference type="PATRIC" id="fig|226900.8.peg.3961"/>
<dbReference type="HOGENOM" id="CLU_100590_5_0_9"/>
<dbReference type="OrthoDB" id="9807878at2"/>
<dbReference type="PRO" id="PR:Q819W3"/>
<dbReference type="Proteomes" id="UP000001417">
    <property type="component" value="Chromosome"/>
</dbReference>
<dbReference type="GO" id="GO:0005737">
    <property type="term" value="C:cytoplasm"/>
    <property type="evidence" value="ECO:0007669"/>
    <property type="project" value="UniProtKB-ARBA"/>
</dbReference>
<dbReference type="GO" id="GO:0015935">
    <property type="term" value="C:small ribosomal subunit"/>
    <property type="evidence" value="ECO:0000318"/>
    <property type="project" value="GO_Central"/>
</dbReference>
<dbReference type="GO" id="GO:0003735">
    <property type="term" value="F:structural constituent of ribosome"/>
    <property type="evidence" value="ECO:0000318"/>
    <property type="project" value="GO_Central"/>
</dbReference>
<dbReference type="GO" id="GO:0006412">
    <property type="term" value="P:translation"/>
    <property type="evidence" value="ECO:0007669"/>
    <property type="project" value="UniProtKB-UniRule"/>
</dbReference>
<dbReference type="FunFam" id="3.30.1320.10:FF:000002">
    <property type="entry name" value="30S ribosomal protein S16"/>
    <property type="match status" value="1"/>
</dbReference>
<dbReference type="Gene3D" id="3.30.1320.10">
    <property type="match status" value="1"/>
</dbReference>
<dbReference type="HAMAP" id="MF_00385">
    <property type="entry name" value="Ribosomal_bS16"/>
    <property type="match status" value="1"/>
</dbReference>
<dbReference type="InterPro" id="IPR000307">
    <property type="entry name" value="Ribosomal_bS16"/>
</dbReference>
<dbReference type="InterPro" id="IPR020592">
    <property type="entry name" value="Ribosomal_bS16_CS"/>
</dbReference>
<dbReference type="InterPro" id="IPR023803">
    <property type="entry name" value="Ribosomal_bS16_dom_sf"/>
</dbReference>
<dbReference type="NCBIfam" id="TIGR00002">
    <property type="entry name" value="S16"/>
    <property type="match status" value="1"/>
</dbReference>
<dbReference type="PANTHER" id="PTHR12919">
    <property type="entry name" value="30S RIBOSOMAL PROTEIN S16"/>
    <property type="match status" value="1"/>
</dbReference>
<dbReference type="PANTHER" id="PTHR12919:SF20">
    <property type="entry name" value="SMALL RIBOSOMAL SUBUNIT PROTEIN BS16M"/>
    <property type="match status" value="1"/>
</dbReference>
<dbReference type="Pfam" id="PF00886">
    <property type="entry name" value="Ribosomal_S16"/>
    <property type="match status" value="1"/>
</dbReference>
<dbReference type="SUPFAM" id="SSF54565">
    <property type="entry name" value="Ribosomal protein S16"/>
    <property type="match status" value="1"/>
</dbReference>
<dbReference type="PROSITE" id="PS00732">
    <property type="entry name" value="RIBOSOMAL_S16"/>
    <property type="match status" value="1"/>
</dbReference>
<reference key="1">
    <citation type="journal article" date="2003" name="Nature">
        <title>Genome sequence of Bacillus cereus and comparative analysis with Bacillus anthracis.</title>
        <authorList>
            <person name="Ivanova N."/>
            <person name="Sorokin A."/>
            <person name="Anderson I."/>
            <person name="Galleron N."/>
            <person name="Candelon B."/>
            <person name="Kapatral V."/>
            <person name="Bhattacharyya A."/>
            <person name="Reznik G."/>
            <person name="Mikhailova N."/>
            <person name="Lapidus A."/>
            <person name="Chu L."/>
            <person name="Mazur M."/>
            <person name="Goltsman E."/>
            <person name="Larsen N."/>
            <person name="D'Souza M."/>
            <person name="Walunas T."/>
            <person name="Grechkin Y."/>
            <person name="Pusch G."/>
            <person name="Haselkorn R."/>
            <person name="Fonstein M."/>
            <person name="Ehrlich S.D."/>
            <person name="Overbeek R."/>
            <person name="Kyrpides N.C."/>
        </authorList>
    </citation>
    <scope>NUCLEOTIDE SEQUENCE [LARGE SCALE GENOMIC DNA]</scope>
    <source>
        <strain>ATCC 14579 / DSM 31 / CCUG 7414 / JCM 2152 / NBRC 15305 / NCIMB 9373 / NCTC 2599 / NRRL B-3711</strain>
    </source>
</reference>
<gene>
    <name evidence="1" type="primary">rpsP</name>
    <name type="ordered locus">BC_3842</name>
</gene>
<accession>Q819W3</accession>